<dbReference type="EC" id="1.13.11.80" evidence="1 2"/>
<dbReference type="EMBL" id="U82965">
    <property type="protein sequence ID" value="AAM80546.1"/>
    <property type="molecule type" value="Genomic_DNA"/>
</dbReference>
<dbReference type="EMBL" id="JFCB01000001">
    <property type="protein sequence ID" value="KES08700.1"/>
    <property type="molecule type" value="Genomic_DNA"/>
</dbReference>
<dbReference type="RefSeq" id="WP_037926382.1">
    <property type="nucleotide sequence ID" value="NZ_JBFADL010000015.1"/>
</dbReference>
<dbReference type="PDB" id="2NP9">
    <property type="method" value="X-ray"/>
    <property type="resolution" value="2.45 A"/>
    <property type="chains" value="A/B/C=2-438"/>
</dbReference>
<dbReference type="PDB" id="2PG8">
    <property type="method" value="X-ray"/>
    <property type="resolution" value="3.00 A"/>
    <property type="chains" value="A/B/C=10-426"/>
</dbReference>
<dbReference type="PDB" id="4YLH">
    <property type="method" value="X-ray"/>
    <property type="resolution" value="2.58 A"/>
    <property type="chains" value="A/B/C/D/E/F/G/H/I/J/K/L=2-438"/>
</dbReference>
<dbReference type="PDB" id="5KAG">
    <property type="method" value="X-ray"/>
    <property type="resolution" value="2.46 A"/>
    <property type="chains" value="A/B/C/D/E/F/G/H/I/J/K/L=1-438"/>
</dbReference>
<dbReference type="PDB" id="5KAH">
    <property type="method" value="X-ray"/>
    <property type="resolution" value="2.78 A"/>
    <property type="chains" value="A/B/C/D/E/F/G/H/I/J/K/L=1-438"/>
</dbReference>
<dbReference type="PDB" id="5KAJ">
    <property type="method" value="X-ray"/>
    <property type="resolution" value="2.68 A"/>
    <property type="chains" value="A/B/C/D/E/F/G/H/I/J/K/L=1-438"/>
</dbReference>
<dbReference type="PDBsum" id="2NP9"/>
<dbReference type="PDBsum" id="2PG8"/>
<dbReference type="PDBsum" id="4YLH"/>
<dbReference type="PDBsum" id="5KAG"/>
<dbReference type="PDBsum" id="5KAH"/>
<dbReference type="PDBsum" id="5KAJ"/>
<dbReference type="SMR" id="Q8KLK7"/>
<dbReference type="DIP" id="DIP-60298N"/>
<dbReference type="STRING" id="55952.BU52_01220"/>
<dbReference type="eggNOG" id="COG1024">
    <property type="taxonomic scope" value="Bacteria"/>
</dbReference>
<dbReference type="OrthoDB" id="7337390at2"/>
<dbReference type="BRENDA" id="1.13.11.80">
    <property type="organism ID" value="6104"/>
</dbReference>
<dbReference type="EvolutionaryTrace" id="Q8KLK7"/>
<dbReference type="Proteomes" id="UP000028341">
    <property type="component" value="Unassembled WGS sequence"/>
</dbReference>
<dbReference type="GO" id="GO:0042802">
    <property type="term" value="F:identical protein binding"/>
    <property type="evidence" value="ECO:0000353"/>
    <property type="project" value="IntAct"/>
</dbReference>
<dbReference type="GO" id="GO:0016702">
    <property type="term" value="F:oxidoreductase activity, acting on single donors with incorporation of molecular oxygen, incorporation of two atoms of oxygen"/>
    <property type="evidence" value="ECO:0000314"/>
    <property type="project" value="UniProtKB"/>
</dbReference>
<dbReference type="GO" id="GO:0017000">
    <property type="term" value="P:antibiotic biosynthetic process"/>
    <property type="evidence" value="ECO:0007669"/>
    <property type="project" value="UniProtKB-KW"/>
</dbReference>
<dbReference type="GO" id="GO:0006635">
    <property type="term" value="P:fatty acid beta-oxidation"/>
    <property type="evidence" value="ECO:0007669"/>
    <property type="project" value="TreeGrafter"/>
</dbReference>
<dbReference type="CDD" id="cd06558">
    <property type="entry name" value="crotonase-like"/>
    <property type="match status" value="1"/>
</dbReference>
<dbReference type="FunFam" id="1.20.58.1300:FF:000001">
    <property type="entry name" value="(3,5-dihydroxyphenyl)acetyl-CoA 1,2-dioxygenase"/>
    <property type="match status" value="1"/>
</dbReference>
<dbReference type="FunFam" id="3.90.226.10:FF:000236">
    <property type="entry name" value="(3,5-dihydroxyphenyl)acetyl-CoA 1,2-dioxygenase"/>
    <property type="match status" value="1"/>
</dbReference>
<dbReference type="Gene3D" id="1.20.58.1300">
    <property type="match status" value="1"/>
</dbReference>
<dbReference type="Gene3D" id="3.90.226.10">
    <property type="entry name" value="2-enoyl-CoA Hydratase, Chain A, domain 1"/>
    <property type="match status" value="1"/>
</dbReference>
<dbReference type="InterPro" id="IPR029045">
    <property type="entry name" value="ClpP/crotonase-like_dom_sf"/>
</dbReference>
<dbReference type="InterPro" id="IPR053482">
    <property type="entry name" value="DPA-CoA_Dioxygenase"/>
</dbReference>
<dbReference type="InterPro" id="IPR001753">
    <property type="entry name" value="Enoyl-CoA_hydra/iso"/>
</dbReference>
<dbReference type="NCBIfam" id="NF042432">
    <property type="entry name" value="DHPACoAdixog_DpgC"/>
    <property type="match status" value="1"/>
</dbReference>
<dbReference type="PANTHER" id="PTHR11941:SF54">
    <property type="entry name" value="ENOYL-COA HYDRATASE, MITOCHONDRIAL"/>
    <property type="match status" value="1"/>
</dbReference>
<dbReference type="PANTHER" id="PTHR11941">
    <property type="entry name" value="ENOYL-COA HYDRATASE-RELATED"/>
    <property type="match status" value="1"/>
</dbReference>
<dbReference type="Pfam" id="PF00378">
    <property type="entry name" value="ECH_1"/>
    <property type="match status" value="1"/>
</dbReference>
<dbReference type="SUPFAM" id="SSF52096">
    <property type="entry name" value="ClpP/crotonase"/>
    <property type="match status" value="1"/>
</dbReference>
<comment type="function">
    <text evidence="1 2">Involved in the biosynthesis of the nonproteinogenic amino acid monomer (S)-3,5-dihydroxyphenylglycine (Dpg) responsible of the production of vancomycin and teicoplanin antibiotics. Catalyzes the unusual conversion 3,5-dihydroxyphenylacetyl-CoA (DPA-CoA) to 3,5-dihydroxyphenylglyoxylate. DpgC performed a net four-electron oxidation of the benzylic carbon of DPA-CoA and the hydrolysis of the thioester bond to generate free CoA (PubMed:17507985, PubMed:18004875). DpgC has the ability to process a diverse range of substituted phenylacetyl-CoA substrates (PubMed:18004875).</text>
</comment>
<comment type="catalytic activity">
    <reaction evidence="1 2">
        <text>(3,5-dihydroxyphenyl)acetyl-CoA + O2 = 2-(3,5-dihydroxyphenyl)-2-oxoacetate + CoA + H(+)</text>
        <dbReference type="Rhea" id="RHEA:44632"/>
        <dbReference type="ChEBI" id="CHEBI:15378"/>
        <dbReference type="ChEBI" id="CHEBI:15379"/>
        <dbReference type="ChEBI" id="CHEBI:57287"/>
        <dbReference type="ChEBI" id="CHEBI:75210"/>
        <dbReference type="ChEBI" id="CHEBI:84554"/>
        <dbReference type="EC" id="1.13.11.80"/>
    </reaction>
</comment>
<comment type="activity regulation">
    <text evidence="2">Inhibited by DPA-S-(N-acetylcysteamine).</text>
</comment>
<comment type="biophysicochemical properties">
    <kinetics>
        <KM evidence="1">3.9 uM for DPA-CoA</KM>
        <KM evidence="1 2">1.7 mM for dioxygen</KM>
        <text evidence="1 2">kcat is 10.32 min(-1) for dioxygenase activity with DPA-CoA as substrate (PubMed:18004875). kcat is 0.172 sec(-1) for dioxygenase activity with DPA-CoA as substrate (PubMed:17507985).</text>
    </kinetics>
</comment>
<comment type="subunit">
    <text evidence="1 2">Homohexamer; dimer of trimers.</text>
</comment>
<comment type="interaction">
    <interactant intactId="EBI-15637670">
        <id>Q8KLK7</id>
    </interactant>
    <interactant intactId="EBI-15637670">
        <id>Q8KLK7</id>
        <label>BU52_01220</label>
    </interactant>
    <organismsDiffer>false</organismsDiffer>
    <experiments>3</experiments>
</comment>
<comment type="similarity">
    <text evidence="4">Belongs to the enoyl-CoA hydratase/isomerase family.</text>
</comment>
<feature type="chain" id="PRO_0000435521" description="(3,5-dihydroxyphenyl)acetyl-CoA 1,2-dioxygenase">
    <location>
        <begin position="1"/>
        <end position="438"/>
    </location>
</feature>
<feature type="binding site" evidence="2">
    <location>
        <position position="183"/>
    </location>
    <ligand>
        <name>substrate</name>
    </ligand>
</feature>
<feature type="binding site" evidence="2">
    <location>
        <position position="189"/>
    </location>
    <ligand>
        <name>substrate</name>
    </ligand>
</feature>
<feature type="binding site" evidence="2">
    <location>
        <begin position="222"/>
        <end position="225"/>
    </location>
    <ligand>
        <name>substrate</name>
    </ligand>
</feature>
<feature type="binding site" evidence="2">
    <location>
        <begin position="233"/>
        <end position="238"/>
    </location>
    <ligand>
        <name>substrate</name>
    </ligand>
</feature>
<feature type="binding site" evidence="2">
    <location>
        <position position="296"/>
    </location>
    <ligand>
        <name>substrate</name>
    </ligand>
</feature>
<feature type="binding site" evidence="2">
    <location>
        <begin position="325"/>
        <end position="327"/>
    </location>
    <ligand>
        <name>substrate</name>
    </ligand>
</feature>
<feature type="binding site" evidence="2">
    <location>
        <position position="416"/>
    </location>
    <ligand>
        <name>substrate</name>
    </ligand>
</feature>
<feature type="mutagenesis site" description="Strong decrease of affinity and the catalytic efficiency compared to the wild-type." evidence="2">
    <original>E</original>
    <variation>Q</variation>
    <location>
        <position position="189"/>
    </location>
</feature>
<feature type="mutagenesis site" description="Strong decrease of affinity for DPA-CoA and 2-fold decrease of the catalytic efficiency compared to the wild-type. Slight decrease of affinity for dioxygen." evidence="1">
    <original>L</original>
    <variation>T</variation>
    <location>
        <position position="237"/>
    </location>
</feature>
<feature type="mutagenesis site" description="Strong decrease of affinity and the catalytic efficiency compared to the wild-type." evidence="2">
    <original>R</original>
    <variation>K</variation>
    <location>
        <position position="254"/>
    </location>
</feature>
<feature type="mutagenesis site" description="Same affinity and catalytic efficiency compared to the wild-type." evidence="2">
    <original>E</original>
    <variation>Q</variation>
    <location>
        <position position="255"/>
    </location>
</feature>
<feature type="mutagenesis site" description="Slight increase of the affinity and 2-fold decrease of the catalytic efficiency compared to the wild-type." evidence="2">
    <original>Q</original>
    <variation>N</variation>
    <location>
        <position position="299"/>
    </location>
</feature>
<feature type="mutagenesis site" description="Loss of dioxygenase activity." evidence="1">
    <original>I</original>
    <variation>T</variation>
    <location>
        <position position="324"/>
    </location>
</feature>
<feature type="mutagenesis site" description="Slight decrease of affinity for DPA-CoA and catalytic efficiency compared to the wild-type. Slight decrease of affinity for dioxygen." evidence="1">
    <original>V</original>
    <variation>T</variation>
    <location>
        <position position="425"/>
    </location>
</feature>
<feature type="mutagenesis site" description="Slight decrease of affinity for DPA-CoA and catalytic efficiency compared to the wild-type. Slight decrease of affinity for dioxygen." evidence="1">
    <original>V</original>
    <variation>T</variation>
    <location>
        <position position="429"/>
    </location>
</feature>
<feature type="helix" evidence="5">
    <location>
        <begin position="14"/>
        <end position="31"/>
    </location>
</feature>
<feature type="helix" evidence="7">
    <location>
        <begin position="35"/>
        <end position="37"/>
    </location>
</feature>
<feature type="helix" evidence="5">
    <location>
        <begin position="40"/>
        <end position="72"/>
    </location>
</feature>
<feature type="turn" evidence="5">
    <location>
        <begin position="73"/>
        <end position="77"/>
    </location>
</feature>
<feature type="helix" evidence="5">
    <location>
        <begin position="82"/>
        <end position="92"/>
    </location>
</feature>
<feature type="turn" evidence="6">
    <location>
        <begin position="94"/>
        <end position="96"/>
    </location>
</feature>
<feature type="helix" evidence="5">
    <location>
        <begin position="100"/>
        <end position="106"/>
    </location>
</feature>
<feature type="turn" evidence="5">
    <location>
        <begin position="111"/>
        <end position="113"/>
    </location>
</feature>
<feature type="helix" evidence="5">
    <location>
        <begin position="118"/>
        <end position="130"/>
    </location>
</feature>
<feature type="helix" evidence="5">
    <location>
        <begin position="134"/>
        <end position="143"/>
    </location>
</feature>
<feature type="helix" evidence="5">
    <location>
        <begin position="147"/>
        <end position="159"/>
    </location>
</feature>
<feature type="strand" evidence="5">
    <location>
        <begin position="160"/>
        <end position="163"/>
    </location>
</feature>
<feature type="strand" evidence="5">
    <location>
        <begin position="165"/>
        <end position="172"/>
    </location>
</feature>
<feature type="strand" evidence="5">
    <location>
        <begin position="175"/>
        <end position="180"/>
    </location>
</feature>
<feature type="turn" evidence="5">
    <location>
        <begin position="183"/>
        <end position="187"/>
    </location>
</feature>
<feature type="helix" evidence="5">
    <location>
        <begin position="191"/>
        <end position="206"/>
    </location>
</feature>
<feature type="strand" evidence="5">
    <location>
        <begin position="211"/>
        <end position="217"/>
    </location>
</feature>
<feature type="turn" evidence="5">
    <location>
        <begin position="223"/>
        <end position="227"/>
    </location>
</feature>
<feature type="helix" evidence="5">
    <location>
        <begin position="237"/>
        <end position="241"/>
    </location>
</feature>
<feature type="turn" evidence="5">
    <location>
        <begin position="247"/>
        <end position="250"/>
    </location>
</feature>
<feature type="helix" evidence="5">
    <location>
        <begin position="251"/>
        <end position="256"/>
    </location>
</feature>
<feature type="helix" evidence="5">
    <location>
        <begin position="258"/>
        <end position="264"/>
    </location>
</feature>
<feature type="turn" evidence="5">
    <location>
        <begin position="273"/>
        <end position="277"/>
    </location>
</feature>
<feature type="strand" evidence="7">
    <location>
        <begin position="279"/>
        <end position="281"/>
    </location>
</feature>
<feature type="strand" evidence="5">
    <location>
        <begin position="285"/>
        <end position="289"/>
    </location>
</feature>
<feature type="strand" evidence="5">
    <location>
        <begin position="291"/>
        <end position="294"/>
    </location>
</feature>
<feature type="helix" evidence="5">
    <location>
        <begin position="296"/>
        <end position="300"/>
    </location>
</feature>
<feature type="helix" evidence="5">
    <location>
        <begin position="301"/>
        <end position="303"/>
    </location>
</feature>
<feature type="strand" evidence="5">
    <location>
        <begin position="305"/>
        <end position="310"/>
    </location>
</feature>
<feature type="strand" evidence="5">
    <location>
        <begin position="314"/>
        <end position="316"/>
    </location>
</feature>
<feature type="turn" evidence="5">
    <location>
        <begin position="320"/>
        <end position="322"/>
    </location>
</feature>
<feature type="helix" evidence="5">
    <location>
        <begin position="329"/>
        <end position="348"/>
    </location>
</feature>
<feature type="strand" evidence="8">
    <location>
        <begin position="351"/>
        <end position="353"/>
    </location>
</feature>
<feature type="helix" evidence="5">
    <location>
        <begin position="357"/>
        <end position="361"/>
    </location>
</feature>
<feature type="strand" evidence="5">
    <location>
        <begin position="364"/>
        <end position="367"/>
    </location>
</feature>
<feature type="helix" evidence="5">
    <location>
        <begin position="369"/>
        <end position="381"/>
    </location>
</feature>
<feature type="helix" evidence="5">
    <location>
        <begin position="386"/>
        <end position="399"/>
    </location>
</feature>
<feature type="helix" evidence="5">
    <location>
        <begin position="402"/>
        <end position="420"/>
    </location>
</feature>
<feature type="helix" evidence="5">
    <location>
        <begin position="423"/>
        <end position="430"/>
    </location>
</feature>
<reference key="1">
    <citation type="journal article" date="1997" name="Proc. Natl. Acad. Sci. U.S.A.">
        <title>D-Ala-D-Ala ligases from glycopeptide antibiotic-producing organisms are highly homologous to the enterococcal vancomycin-resistance ligases VanA and VanB.</title>
        <authorList>
            <person name="Marshall C.G."/>
            <person name="Broadhead G."/>
            <person name="Leskiw B.K."/>
            <person name="Wright G.D."/>
        </authorList>
    </citation>
    <scope>NUCLEOTIDE SEQUENCE [GENOMIC DNA]</scope>
    <source>
        <strain>NRRL 15009</strain>
    </source>
</reference>
<reference key="2">
    <citation type="journal article" date="2002" name="Proc. Natl. Acad. Sci. U.S.A.">
        <title>Assembling the glycopeptide antibiotic scaffold: the biosynthesis of A47934 from Streptomyces toyocaensis NRRL15009.</title>
        <authorList>
            <person name="Pootoolal J."/>
            <person name="Thomas M.G."/>
            <person name="Marshall C.G."/>
            <person name="Neu J.M."/>
            <person name="Hubbard B.K."/>
            <person name="Walsh C.T."/>
            <person name="Wright G.D."/>
        </authorList>
    </citation>
    <scope>NUCLEOTIDE SEQUENCE [GENOMIC DNA]</scope>
    <source>
        <strain>NRRL 15009</strain>
    </source>
</reference>
<reference key="3">
    <citation type="submission" date="2014-02" db="EMBL/GenBank/DDBJ databases">
        <title>The genome announcement of Streptomyces toyocaensis NRRL15009.</title>
        <authorList>
            <person name="Hong H.-J."/>
            <person name="Kwun M.J."/>
        </authorList>
    </citation>
    <scope>NUCLEOTIDE SEQUENCE [LARGE SCALE GENOMIC DNA]</scope>
    <source>
        <strain>NRRL 15009</strain>
    </source>
</reference>
<reference key="4">
    <citation type="journal article" date="2007" name="Biochemistry">
        <title>Substrate recognition and catalysis by the cofactor-independent dioxygenase DpgC.</title>
        <authorList>
            <person name="Fielding E.N."/>
            <person name="Widboom P.F."/>
            <person name="Bruner S.D."/>
        </authorList>
    </citation>
    <scope>X-RAY CRYSTALLOGRAPHY (3.00 ANGSTROMS) OF 10-426 OF MUTANT LYS-245 IN COMPLEX WITH ANALOG SUBSTRATE</scope>
    <scope>FUNCTION</scope>
    <scope>CATALYTIC ACTIVITY</scope>
    <scope>BIOPHYSICOCHEMICAL PROPERTIES</scope>
    <scope>MUTAGENESIS OF GLU-189; ARG-254; GLU-255 AND GLN-299</scope>
    <scope>ACTIVITY REGULATION</scope>
    <scope>SUBSTRATE SPECIFICITY</scope>
    <scope>SUBUNIT</scope>
</reference>
<reference key="5">
    <citation type="journal article" date="2007" name="Nature">
        <title>Structural basis for cofactor-independent dioxygenation in vancomycin biosynthesis.</title>
        <authorList>
            <person name="Widboom P.F."/>
            <person name="Fielding E.N."/>
            <person name="Liu Y."/>
            <person name="Bruner S.D."/>
        </authorList>
    </citation>
    <scope>X-RAY CRYSTALLOGRAPHY (2.45 ANGSTROMS) OF 2-438 IN COMPLEX WITH ANALOG SUBSTRATE</scope>
    <scope>FUNCTION</scope>
    <scope>CATALYTIC ACTIVITY</scope>
    <scope>BIOPHYSICOCHEMICAL PROPERTIES</scope>
    <scope>MUTAGENESIS OF LEU-237; ILE-324; VAL-425 AND VAL-429</scope>
    <scope>REACTION MECHANISM</scope>
    <scope>SUBUNIT</scope>
</reference>
<evidence type="ECO:0000269" key="1">
    <source>
    </source>
</evidence>
<evidence type="ECO:0000269" key="2">
    <source>
    </source>
</evidence>
<evidence type="ECO:0000303" key="3">
    <source>
    </source>
</evidence>
<evidence type="ECO:0000305" key="4"/>
<evidence type="ECO:0007829" key="5">
    <source>
        <dbReference type="PDB" id="2NP9"/>
    </source>
</evidence>
<evidence type="ECO:0007829" key="6">
    <source>
        <dbReference type="PDB" id="4YLH"/>
    </source>
</evidence>
<evidence type="ECO:0007829" key="7">
    <source>
        <dbReference type="PDB" id="5KAG"/>
    </source>
</evidence>
<evidence type="ECO:0007829" key="8">
    <source>
        <dbReference type="PDB" id="5KAJ"/>
    </source>
</evidence>
<gene>
    <name type="ORF">BU52_01220</name>
</gene>
<proteinExistence type="evidence at protein level"/>
<sequence>MTTVLPPLEDTDGLWAALTEAAASVEKLLATLPEHGARSSAERAEIAAAHDAARALRVRFLDTHADAVYDRLTDHRRVHLRLAELVEAAATAFPGLVPTQQQLAVERSLPQAAKEGHEIDQGIFLRAVLRSPLAGPHLLDAMLRPTPRALELLPEFVRTGEVEMEAVHLERRDGVARLTMCRDDRLNAEDGQQVDDMETAVDLALLDPGVRVGLLRGGVMSHPRYRGKRVFSAGINLKYLSQGGISLVDFLMRRELGYIHKLVRGVLTNDDRPGWWHSPRIEKPWVAAVDGFAIGGGAQLLLVFDRVLASSDAYFSLPAAKEGIIPGAANLRLGRFAGPRVSRQVILEGRRIWAKEPEARLLVDEVVEPDELDAAIERSLTRLDGDAVLANRRMLNLADESPDGFRAYMAEFALMQALRLYGHDVIDKVGRFGGRPPA</sequence>
<protein>
    <recommendedName>
        <fullName evidence="3">(3,5-dihydroxyphenyl)acetyl-CoA 1,2-dioxygenase</fullName>
        <ecNumber evidence="1 2">1.13.11.80</ecNumber>
    </recommendedName>
</protein>
<organism>
    <name type="scientific">Streptomyces toyocaensis</name>
    <dbReference type="NCBI Taxonomy" id="55952"/>
    <lineage>
        <taxon>Bacteria</taxon>
        <taxon>Bacillati</taxon>
        <taxon>Actinomycetota</taxon>
        <taxon>Actinomycetes</taxon>
        <taxon>Kitasatosporales</taxon>
        <taxon>Streptomycetaceae</taxon>
        <taxon>Streptomyces</taxon>
    </lineage>
</organism>
<keyword id="KW-0002">3D-structure</keyword>
<keyword id="KW-0045">Antibiotic biosynthesis</keyword>
<keyword id="KW-0560">Oxidoreductase</keyword>
<keyword id="KW-1185">Reference proteome</keyword>
<accession>Q8KLK7</accession>
<name>DPGC_STRTO</name>